<accession>Q1BRU3</accession>
<name>RS12_BURO1</name>
<feature type="chain" id="PRO_0000263545" description="Small ribosomal subunit protein uS12">
    <location>
        <begin position="1"/>
        <end position="126"/>
    </location>
</feature>
<feature type="region of interest" description="Disordered" evidence="3">
    <location>
        <begin position="1"/>
        <end position="28"/>
    </location>
</feature>
<feature type="region of interest" description="Disordered" evidence="3">
    <location>
        <begin position="103"/>
        <end position="126"/>
    </location>
</feature>
<feature type="compositionally biased region" description="Basic residues" evidence="3">
    <location>
        <begin position="113"/>
        <end position="126"/>
    </location>
</feature>
<feature type="modified residue" description="3-methylthioaspartic acid" evidence="1">
    <location>
        <position position="89"/>
    </location>
</feature>
<organism>
    <name type="scientific">Burkholderia orbicola (strain AU 1054)</name>
    <dbReference type="NCBI Taxonomy" id="331271"/>
    <lineage>
        <taxon>Bacteria</taxon>
        <taxon>Pseudomonadati</taxon>
        <taxon>Pseudomonadota</taxon>
        <taxon>Betaproteobacteria</taxon>
        <taxon>Burkholderiales</taxon>
        <taxon>Burkholderiaceae</taxon>
        <taxon>Burkholderia</taxon>
        <taxon>Burkholderia cepacia complex</taxon>
        <taxon>Burkholderia orbicola</taxon>
    </lineage>
</organism>
<gene>
    <name evidence="2" type="primary">rpsL</name>
    <name type="ordered locus">Bcen_2764</name>
</gene>
<evidence type="ECO:0000250" key="1"/>
<evidence type="ECO:0000255" key="2">
    <source>
        <dbReference type="HAMAP-Rule" id="MF_00403"/>
    </source>
</evidence>
<evidence type="ECO:0000256" key="3">
    <source>
        <dbReference type="SAM" id="MobiDB-lite"/>
    </source>
</evidence>
<evidence type="ECO:0000305" key="4"/>
<protein>
    <recommendedName>
        <fullName evidence="2">Small ribosomal subunit protein uS12</fullName>
    </recommendedName>
    <alternativeName>
        <fullName evidence="4">30S ribosomal protein S12</fullName>
    </alternativeName>
</protein>
<keyword id="KW-0488">Methylation</keyword>
<keyword id="KW-0687">Ribonucleoprotein</keyword>
<keyword id="KW-0689">Ribosomal protein</keyword>
<keyword id="KW-0694">RNA-binding</keyword>
<keyword id="KW-0699">rRNA-binding</keyword>
<keyword id="KW-0820">tRNA-binding</keyword>
<proteinExistence type="inferred from homology"/>
<reference key="1">
    <citation type="submission" date="2006-05" db="EMBL/GenBank/DDBJ databases">
        <title>Complete sequence of chromosome 1 of Burkholderia cenocepacia AU 1054.</title>
        <authorList>
            <consortium name="US DOE Joint Genome Institute"/>
            <person name="Copeland A."/>
            <person name="Lucas S."/>
            <person name="Lapidus A."/>
            <person name="Barry K."/>
            <person name="Detter J.C."/>
            <person name="Glavina del Rio T."/>
            <person name="Hammon N."/>
            <person name="Israni S."/>
            <person name="Dalin E."/>
            <person name="Tice H."/>
            <person name="Pitluck S."/>
            <person name="Chain P."/>
            <person name="Malfatti S."/>
            <person name="Shin M."/>
            <person name="Vergez L."/>
            <person name="Schmutz J."/>
            <person name="Larimer F."/>
            <person name="Land M."/>
            <person name="Hauser L."/>
            <person name="Kyrpides N."/>
            <person name="Lykidis A."/>
            <person name="LiPuma J.J."/>
            <person name="Konstantinidis K."/>
            <person name="Tiedje J.M."/>
            <person name="Richardson P."/>
        </authorList>
    </citation>
    <scope>NUCLEOTIDE SEQUENCE [LARGE SCALE GENOMIC DNA]</scope>
    <source>
        <strain>AU 1054</strain>
    </source>
</reference>
<sequence>MPTINQLVRKGRQSETTKSKSPALQDCPQRRGVCTRVYTTTPKKPNSALRKVAKVRLTNGFEVISYIGGEGHNLQEHSVVLIRGGRVKDLPGVRYHMVRGSLDTQGVKDRKQARSKYGAKRAKAAK</sequence>
<dbReference type="EMBL" id="CP000378">
    <property type="protein sequence ID" value="ABF77662.1"/>
    <property type="molecule type" value="Genomic_DNA"/>
</dbReference>
<dbReference type="SMR" id="Q1BRU3"/>
<dbReference type="HOGENOM" id="CLU_104295_1_2_4"/>
<dbReference type="GO" id="GO:0015935">
    <property type="term" value="C:small ribosomal subunit"/>
    <property type="evidence" value="ECO:0007669"/>
    <property type="project" value="InterPro"/>
</dbReference>
<dbReference type="GO" id="GO:0019843">
    <property type="term" value="F:rRNA binding"/>
    <property type="evidence" value="ECO:0007669"/>
    <property type="project" value="UniProtKB-UniRule"/>
</dbReference>
<dbReference type="GO" id="GO:0003735">
    <property type="term" value="F:structural constituent of ribosome"/>
    <property type="evidence" value="ECO:0007669"/>
    <property type="project" value="InterPro"/>
</dbReference>
<dbReference type="GO" id="GO:0000049">
    <property type="term" value="F:tRNA binding"/>
    <property type="evidence" value="ECO:0007669"/>
    <property type="project" value="UniProtKB-UniRule"/>
</dbReference>
<dbReference type="GO" id="GO:0006412">
    <property type="term" value="P:translation"/>
    <property type="evidence" value="ECO:0007669"/>
    <property type="project" value="UniProtKB-UniRule"/>
</dbReference>
<dbReference type="CDD" id="cd03368">
    <property type="entry name" value="Ribosomal_S12"/>
    <property type="match status" value="1"/>
</dbReference>
<dbReference type="FunFam" id="2.40.50.140:FF:000001">
    <property type="entry name" value="30S ribosomal protein S12"/>
    <property type="match status" value="1"/>
</dbReference>
<dbReference type="Gene3D" id="2.40.50.140">
    <property type="entry name" value="Nucleic acid-binding proteins"/>
    <property type="match status" value="1"/>
</dbReference>
<dbReference type="HAMAP" id="MF_00403_B">
    <property type="entry name" value="Ribosomal_uS12_B"/>
    <property type="match status" value="1"/>
</dbReference>
<dbReference type="InterPro" id="IPR012340">
    <property type="entry name" value="NA-bd_OB-fold"/>
</dbReference>
<dbReference type="InterPro" id="IPR006032">
    <property type="entry name" value="Ribosomal_uS12"/>
</dbReference>
<dbReference type="InterPro" id="IPR005679">
    <property type="entry name" value="Ribosomal_uS12_bac"/>
</dbReference>
<dbReference type="NCBIfam" id="TIGR00981">
    <property type="entry name" value="rpsL_bact"/>
    <property type="match status" value="1"/>
</dbReference>
<dbReference type="PANTHER" id="PTHR11652">
    <property type="entry name" value="30S RIBOSOMAL PROTEIN S12 FAMILY MEMBER"/>
    <property type="match status" value="1"/>
</dbReference>
<dbReference type="Pfam" id="PF00164">
    <property type="entry name" value="Ribosom_S12_S23"/>
    <property type="match status" value="1"/>
</dbReference>
<dbReference type="PIRSF" id="PIRSF002133">
    <property type="entry name" value="Ribosomal_S12/S23"/>
    <property type="match status" value="1"/>
</dbReference>
<dbReference type="PRINTS" id="PR01034">
    <property type="entry name" value="RIBOSOMALS12"/>
</dbReference>
<dbReference type="SUPFAM" id="SSF50249">
    <property type="entry name" value="Nucleic acid-binding proteins"/>
    <property type="match status" value="1"/>
</dbReference>
<dbReference type="PROSITE" id="PS00055">
    <property type="entry name" value="RIBOSOMAL_S12"/>
    <property type="match status" value="1"/>
</dbReference>
<comment type="function">
    <text evidence="2">With S4 and S5 plays an important role in translational accuracy.</text>
</comment>
<comment type="function">
    <text evidence="2">Interacts with and stabilizes bases of the 16S rRNA that are involved in tRNA selection in the A site and with the mRNA backbone. Located at the interface of the 30S and 50S subunits, it traverses the body of the 30S subunit contacting proteins on the other side and probably holding the rRNA structure together. The combined cluster of proteins S8, S12 and S17 appears to hold together the shoulder and platform of the 30S subunit.</text>
</comment>
<comment type="subunit">
    <text evidence="2">Part of the 30S ribosomal subunit. Contacts proteins S8 and S17. May interact with IF1 in the 30S initiation complex.</text>
</comment>
<comment type="similarity">
    <text evidence="2">Belongs to the universal ribosomal protein uS12 family.</text>
</comment>